<name>RS23B_NAUCA</name>
<accession>P0CY40</accession>
<accession>G0V8D0</accession>
<accession>Q6YIA2</accession>
<keyword id="KW-0379">Hydroxylation</keyword>
<keyword id="KW-1185">Reference proteome</keyword>
<keyword id="KW-0687">Ribonucleoprotein</keyword>
<keyword id="KW-0689">Ribosomal protein</keyword>
<reference key="1">
    <citation type="journal article" date="2003" name="Nature">
        <title>Yeast genome duplication was followed by asynchronous differentiation of duplicated genes.</title>
        <authorList>
            <person name="Langkjaer R.B."/>
            <person name="Cliften P.F."/>
            <person name="Johnston M."/>
            <person name="Piskur J."/>
        </authorList>
    </citation>
    <scope>NUCLEOTIDE SEQUENCE [GENOMIC DNA]</scope>
    <source>
        <strain>ATCC 76901 / BCRC 22586 / CBS 4309 / NBRC 1992 / NRRL Y-12630</strain>
    </source>
</reference>
<reference key="2">
    <citation type="submission" date="2011-07" db="EMBL/GenBank/DDBJ databases">
        <title>Genome sequence of Naumovozyma castellii.</title>
        <authorList>
            <person name="Gordon J.L."/>
            <person name="Armisen D."/>
            <person name="Proux-Wera E."/>
            <person name="OhEigeartaigh S.S."/>
            <person name="Byrne K.P."/>
            <person name="Wolfe K.H."/>
        </authorList>
    </citation>
    <scope>NUCLEOTIDE SEQUENCE [LARGE SCALE GENOMIC DNA]</scope>
    <source>
        <strain>ATCC 76901 / BCRC 22586 / CBS 4309 / NBRC 1992 / NRRL Y-12630</strain>
    </source>
</reference>
<evidence type="ECO:0000250" key="1"/>
<evidence type="ECO:0000305" key="2"/>
<feature type="chain" id="PRO_0000413987" description="Small ribosomal subunit protein uS12B">
    <location>
        <begin position="1"/>
        <end position="145"/>
    </location>
</feature>
<feature type="modified residue" description="Hydroxyproline" evidence="1">
    <location>
        <position position="64"/>
    </location>
</feature>
<organism>
    <name type="scientific">Naumovozyma castellii</name>
    <name type="common">Yeast</name>
    <name type="synonym">Saccharomyces castellii</name>
    <dbReference type="NCBI Taxonomy" id="27288"/>
    <lineage>
        <taxon>Eukaryota</taxon>
        <taxon>Fungi</taxon>
        <taxon>Dikarya</taxon>
        <taxon>Ascomycota</taxon>
        <taxon>Saccharomycotina</taxon>
        <taxon>Saccharomycetes</taxon>
        <taxon>Saccharomycetales</taxon>
        <taxon>Saccharomycetaceae</taxon>
        <taxon>Naumovozyma</taxon>
    </lineage>
</organism>
<gene>
    <name type="primary">RPS23B</name>
    <name type="ordered locus">NCAS_0E00920</name>
</gene>
<proteinExistence type="inferred from homology"/>
<comment type="similarity">
    <text evidence="2">Belongs to the universal ribosomal protein uS12 family.</text>
</comment>
<sequence length="145" mass="16038">MGKGKPRGLNSARKLRVHRRNNRWAENNYKKRLLGTAFKSSPFGGSSHAKGIVLEKLGIESKQPNSAIRKCVRVQLIKNGKKVTAFVPNDGCLNFVDENDEVLLAGFGRKGKAKGDIPGVRFKVVKVSGVSLLALWKEKKEKPRS</sequence>
<dbReference type="EMBL" id="AY144958">
    <property type="protein sequence ID" value="AAO32521.1"/>
    <property type="molecule type" value="Genomic_DNA"/>
</dbReference>
<dbReference type="EMBL" id="HE576756">
    <property type="protein sequence ID" value="CCC70162.1"/>
    <property type="molecule type" value="Genomic_DNA"/>
</dbReference>
<dbReference type="SMR" id="P0CY40"/>
<dbReference type="FunCoup" id="P0CY40">
    <property type="interactions" value="938"/>
</dbReference>
<dbReference type="STRING" id="1064592.P0CY40"/>
<dbReference type="KEGG" id="ncs:NCAS_0A11700"/>
<dbReference type="KEGG" id="ncs:NCAS_0E00920"/>
<dbReference type="HOGENOM" id="CLU_115574_0_1_1"/>
<dbReference type="InParanoid" id="P0CY40"/>
<dbReference type="OrthoDB" id="1713912at2759"/>
<dbReference type="Proteomes" id="UP000001640">
    <property type="component" value="Chromosome 5"/>
</dbReference>
<dbReference type="GO" id="GO:0022627">
    <property type="term" value="C:cytosolic small ribosomal subunit"/>
    <property type="evidence" value="ECO:0007669"/>
    <property type="project" value="EnsemblFungi"/>
</dbReference>
<dbReference type="GO" id="GO:0003735">
    <property type="term" value="F:structural constituent of ribosome"/>
    <property type="evidence" value="ECO:0007669"/>
    <property type="project" value="EnsemblFungi"/>
</dbReference>
<dbReference type="GO" id="GO:1990145">
    <property type="term" value="P:maintenance of translational fidelity"/>
    <property type="evidence" value="ECO:0007669"/>
    <property type="project" value="EnsemblFungi"/>
</dbReference>
<dbReference type="GO" id="GO:0000462">
    <property type="term" value="P:maturation of SSU-rRNA from tricistronic rRNA transcript (SSU-rRNA, 5.8S rRNA, LSU-rRNA)"/>
    <property type="evidence" value="ECO:0007669"/>
    <property type="project" value="EnsemblFungi"/>
</dbReference>
<dbReference type="GO" id="GO:0006450">
    <property type="term" value="P:regulation of translational fidelity"/>
    <property type="evidence" value="ECO:0007669"/>
    <property type="project" value="EnsemblFungi"/>
</dbReference>
<dbReference type="CDD" id="cd03367">
    <property type="entry name" value="Ribosomal_S23"/>
    <property type="match status" value="1"/>
</dbReference>
<dbReference type="FunFam" id="2.40.50.140:FF:000007">
    <property type="entry name" value="40S ribosomal protein S23"/>
    <property type="match status" value="1"/>
</dbReference>
<dbReference type="Gene3D" id="2.40.50.140">
    <property type="entry name" value="Nucleic acid-binding proteins"/>
    <property type="match status" value="1"/>
</dbReference>
<dbReference type="InterPro" id="IPR012340">
    <property type="entry name" value="NA-bd_OB-fold"/>
</dbReference>
<dbReference type="InterPro" id="IPR006032">
    <property type="entry name" value="Ribosomal_uS12"/>
</dbReference>
<dbReference type="InterPro" id="IPR005680">
    <property type="entry name" value="Ribosomal_uS12_euk/arc"/>
</dbReference>
<dbReference type="NCBIfam" id="NF003254">
    <property type="entry name" value="PRK04211.1"/>
    <property type="match status" value="1"/>
</dbReference>
<dbReference type="NCBIfam" id="TIGR00982">
    <property type="entry name" value="uS12_E_A"/>
    <property type="match status" value="1"/>
</dbReference>
<dbReference type="PANTHER" id="PTHR11652">
    <property type="entry name" value="30S RIBOSOMAL PROTEIN S12 FAMILY MEMBER"/>
    <property type="match status" value="1"/>
</dbReference>
<dbReference type="Pfam" id="PF00164">
    <property type="entry name" value="Ribosom_S12_S23"/>
    <property type="match status" value="1"/>
</dbReference>
<dbReference type="PIRSF" id="PIRSF002133">
    <property type="entry name" value="Ribosomal_S12/S23"/>
    <property type="match status" value="1"/>
</dbReference>
<dbReference type="SUPFAM" id="SSF50249">
    <property type="entry name" value="Nucleic acid-binding proteins"/>
    <property type="match status" value="1"/>
</dbReference>
<dbReference type="PROSITE" id="PS00055">
    <property type="entry name" value="RIBOSOMAL_S12"/>
    <property type="match status" value="1"/>
</dbReference>
<protein>
    <recommendedName>
        <fullName evidence="2">Small ribosomal subunit protein uS12B</fullName>
    </recommendedName>
    <alternativeName>
        <fullName>40S ribosomal protein S23-B</fullName>
    </alternativeName>
</protein>